<protein>
    <recommendedName>
        <fullName evidence="1">Ribonuclease HII</fullName>
        <shortName evidence="1">RNase HII</shortName>
        <ecNumber evidence="1">3.1.26.4</ecNumber>
    </recommendedName>
</protein>
<sequence length="199" mass="22538">MLLPYMETGRIEAGCDEAGRGCLAGAVFAAAVILPEDFKNEDLNDSKQLSEKKRYKLRPVIEREAIAWAVGIVSPEEIDKINILKASFLAMHRAIEQLKVRPEHLLIDGNRFTPYPDIPHTTVVKGDGKYLSIAAASILAKTYRDDYMNELALEYPAYHWLDNKGYPTKVHREAIRTHGITPYHRKTFTLLPEQLTLGF</sequence>
<organism>
    <name type="scientific">Parabacteroides distasonis (strain ATCC 8503 / DSM 20701 / CIP 104284 / JCM 5825 / NCTC 11152)</name>
    <dbReference type="NCBI Taxonomy" id="435591"/>
    <lineage>
        <taxon>Bacteria</taxon>
        <taxon>Pseudomonadati</taxon>
        <taxon>Bacteroidota</taxon>
        <taxon>Bacteroidia</taxon>
        <taxon>Bacteroidales</taxon>
        <taxon>Tannerellaceae</taxon>
        <taxon>Parabacteroides</taxon>
    </lineage>
</organism>
<feature type="chain" id="PRO_1000031174" description="Ribonuclease HII">
    <location>
        <begin position="1"/>
        <end position="199"/>
    </location>
</feature>
<feature type="domain" description="RNase H type-2" evidence="2">
    <location>
        <begin position="10"/>
        <end position="199"/>
    </location>
</feature>
<feature type="binding site" evidence="1">
    <location>
        <position position="16"/>
    </location>
    <ligand>
        <name>a divalent metal cation</name>
        <dbReference type="ChEBI" id="CHEBI:60240"/>
    </ligand>
</feature>
<feature type="binding site" evidence="1">
    <location>
        <position position="17"/>
    </location>
    <ligand>
        <name>a divalent metal cation</name>
        <dbReference type="ChEBI" id="CHEBI:60240"/>
    </ligand>
</feature>
<feature type="binding site" evidence="1">
    <location>
        <position position="108"/>
    </location>
    <ligand>
        <name>a divalent metal cation</name>
        <dbReference type="ChEBI" id="CHEBI:60240"/>
    </ligand>
</feature>
<reference key="1">
    <citation type="journal article" date="2007" name="PLoS Biol.">
        <title>Evolution of symbiotic bacteria in the distal human intestine.</title>
        <authorList>
            <person name="Xu J."/>
            <person name="Mahowald M.A."/>
            <person name="Ley R.E."/>
            <person name="Lozupone C.A."/>
            <person name="Hamady M."/>
            <person name="Martens E.C."/>
            <person name="Henrissat B."/>
            <person name="Coutinho P.M."/>
            <person name="Minx P."/>
            <person name="Latreille P."/>
            <person name="Cordum H."/>
            <person name="Van Brunt A."/>
            <person name="Kim K."/>
            <person name="Fulton R.S."/>
            <person name="Fulton L.A."/>
            <person name="Clifton S.W."/>
            <person name="Wilson R.K."/>
            <person name="Knight R.D."/>
            <person name="Gordon J.I."/>
        </authorList>
    </citation>
    <scope>NUCLEOTIDE SEQUENCE [LARGE SCALE GENOMIC DNA]</scope>
    <source>
        <strain>ATCC 8503 / DSM 20701 / CIP 104284 / JCM 5825 / NCTC 11152</strain>
    </source>
</reference>
<keyword id="KW-0963">Cytoplasm</keyword>
<keyword id="KW-0255">Endonuclease</keyword>
<keyword id="KW-0378">Hydrolase</keyword>
<keyword id="KW-0464">Manganese</keyword>
<keyword id="KW-0479">Metal-binding</keyword>
<keyword id="KW-0540">Nuclease</keyword>
<keyword id="KW-1185">Reference proteome</keyword>
<comment type="function">
    <text evidence="1">Endonuclease that specifically degrades the RNA of RNA-DNA hybrids.</text>
</comment>
<comment type="catalytic activity">
    <reaction evidence="1">
        <text>Endonucleolytic cleavage to 5'-phosphomonoester.</text>
        <dbReference type="EC" id="3.1.26.4"/>
    </reaction>
</comment>
<comment type="cofactor">
    <cofactor evidence="1">
        <name>Mn(2+)</name>
        <dbReference type="ChEBI" id="CHEBI:29035"/>
    </cofactor>
    <cofactor evidence="1">
        <name>Mg(2+)</name>
        <dbReference type="ChEBI" id="CHEBI:18420"/>
    </cofactor>
    <text evidence="1">Manganese or magnesium. Binds 1 divalent metal ion per monomer in the absence of substrate. May bind a second metal ion after substrate binding.</text>
</comment>
<comment type="subcellular location">
    <subcellularLocation>
        <location evidence="1">Cytoplasm</location>
    </subcellularLocation>
</comment>
<comment type="similarity">
    <text evidence="1">Belongs to the RNase HII family.</text>
</comment>
<evidence type="ECO:0000255" key="1">
    <source>
        <dbReference type="HAMAP-Rule" id="MF_00052"/>
    </source>
</evidence>
<evidence type="ECO:0000255" key="2">
    <source>
        <dbReference type="PROSITE-ProRule" id="PRU01319"/>
    </source>
</evidence>
<accession>A6LHT2</accession>
<dbReference type="EC" id="3.1.26.4" evidence="1"/>
<dbReference type="EMBL" id="CP000140">
    <property type="protein sequence ID" value="ABR45246.1"/>
    <property type="molecule type" value="Genomic_DNA"/>
</dbReference>
<dbReference type="RefSeq" id="WP_005859375.1">
    <property type="nucleotide sequence ID" value="NZ_LR215978.1"/>
</dbReference>
<dbReference type="SMR" id="A6LHT2"/>
<dbReference type="STRING" id="435591.BDI_3545"/>
<dbReference type="PaxDb" id="435591-BDI_3545"/>
<dbReference type="KEGG" id="pdi:BDI_3545"/>
<dbReference type="eggNOG" id="COG0164">
    <property type="taxonomic scope" value="Bacteria"/>
</dbReference>
<dbReference type="HOGENOM" id="CLU_036532_3_1_10"/>
<dbReference type="BioCyc" id="PDIS435591:G1G5A-3637-MONOMER"/>
<dbReference type="Proteomes" id="UP000000566">
    <property type="component" value="Chromosome"/>
</dbReference>
<dbReference type="GO" id="GO:0005737">
    <property type="term" value="C:cytoplasm"/>
    <property type="evidence" value="ECO:0007669"/>
    <property type="project" value="UniProtKB-SubCell"/>
</dbReference>
<dbReference type="GO" id="GO:0032299">
    <property type="term" value="C:ribonuclease H2 complex"/>
    <property type="evidence" value="ECO:0007669"/>
    <property type="project" value="TreeGrafter"/>
</dbReference>
<dbReference type="GO" id="GO:0030145">
    <property type="term" value="F:manganese ion binding"/>
    <property type="evidence" value="ECO:0007669"/>
    <property type="project" value="UniProtKB-UniRule"/>
</dbReference>
<dbReference type="GO" id="GO:0003723">
    <property type="term" value="F:RNA binding"/>
    <property type="evidence" value="ECO:0007669"/>
    <property type="project" value="InterPro"/>
</dbReference>
<dbReference type="GO" id="GO:0004523">
    <property type="term" value="F:RNA-DNA hybrid ribonuclease activity"/>
    <property type="evidence" value="ECO:0007669"/>
    <property type="project" value="UniProtKB-UniRule"/>
</dbReference>
<dbReference type="GO" id="GO:0043137">
    <property type="term" value="P:DNA replication, removal of RNA primer"/>
    <property type="evidence" value="ECO:0007669"/>
    <property type="project" value="TreeGrafter"/>
</dbReference>
<dbReference type="GO" id="GO:0006298">
    <property type="term" value="P:mismatch repair"/>
    <property type="evidence" value="ECO:0007669"/>
    <property type="project" value="TreeGrafter"/>
</dbReference>
<dbReference type="CDD" id="cd07182">
    <property type="entry name" value="RNase_HII_bacteria_HII_like"/>
    <property type="match status" value="1"/>
</dbReference>
<dbReference type="FunFam" id="3.30.420.10:FF:000078">
    <property type="entry name" value="Ribonuclease HII"/>
    <property type="match status" value="1"/>
</dbReference>
<dbReference type="Gene3D" id="3.30.420.10">
    <property type="entry name" value="Ribonuclease H-like superfamily/Ribonuclease H"/>
    <property type="match status" value="1"/>
</dbReference>
<dbReference type="HAMAP" id="MF_00052_B">
    <property type="entry name" value="RNase_HII_B"/>
    <property type="match status" value="1"/>
</dbReference>
<dbReference type="InterPro" id="IPR022898">
    <property type="entry name" value="RNase_HII"/>
</dbReference>
<dbReference type="InterPro" id="IPR001352">
    <property type="entry name" value="RNase_HII/HIII"/>
</dbReference>
<dbReference type="InterPro" id="IPR024567">
    <property type="entry name" value="RNase_HII/HIII_dom"/>
</dbReference>
<dbReference type="InterPro" id="IPR012337">
    <property type="entry name" value="RNaseH-like_sf"/>
</dbReference>
<dbReference type="InterPro" id="IPR036397">
    <property type="entry name" value="RNaseH_sf"/>
</dbReference>
<dbReference type="NCBIfam" id="NF000595">
    <property type="entry name" value="PRK00015.1-3"/>
    <property type="match status" value="1"/>
</dbReference>
<dbReference type="PANTHER" id="PTHR10954">
    <property type="entry name" value="RIBONUCLEASE H2 SUBUNIT A"/>
    <property type="match status" value="1"/>
</dbReference>
<dbReference type="PANTHER" id="PTHR10954:SF18">
    <property type="entry name" value="RIBONUCLEASE HII"/>
    <property type="match status" value="1"/>
</dbReference>
<dbReference type="Pfam" id="PF01351">
    <property type="entry name" value="RNase_HII"/>
    <property type="match status" value="1"/>
</dbReference>
<dbReference type="SUPFAM" id="SSF53098">
    <property type="entry name" value="Ribonuclease H-like"/>
    <property type="match status" value="1"/>
</dbReference>
<dbReference type="PROSITE" id="PS51975">
    <property type="entry name" value="RNASE_H_2"/>
    <property type="match status" value="1"/>
</dbReference>
<gene>
    <name evidence="1" type="primary">rnhB</name>
    <name type="ordered locus">BDI_3545</name>
</gene>
<name>RNH2_PARD8</name>
<proteinExistence type="inferred from homology"/>